<accession>A6V0K2</accession>
<organism>
    <name type="scientific">Pseudomonas paraeruginosa (strain DSM 24068 / PA7)</name>
    <name type="common">Pseudomonas aeruginosa (strain PA7)</name>
    <dbReference type="NCBI Taxonomy" id="381754"/>
    <lineage>
        <taxon>Bacteria</taxon>
        <taxon>Pseudomonadati</taxon>
        <taxon>Pseudomonadota</taxon>
        <taxon>Gammaproteobacteria</taxon>
        <taxon>Pseudomonadales</taxon>
        <taxon>Pseudomonadaceae</taxon>
        <taxon>Pseudomonas</taxon>
        <taxon>Pseudomonas paraeruginosa</taxon>
    </lineage>
</organism>
<reference key="1">
    <citation type="submission" date="2007-06" db="EMBL/GenBank/DDBJ databases">
        <authorList>
            <person name="Dodson R.J."/>
            <person name="Harkins D."/>
            <person name="Paulsen I.T."/>
        </authorList>
    </citation>
    <scope>NUCLEOTIDE SEQUENCE [LARGE SCALE GENOMIC DNA]</scope>
    <source>
        <strain>DSM 24068 / PA7</strain>
    </source>
</reference>
<gene>
    <name evidence="1" type="primary">prfC</name>
    <name type="ordered locus">PSPA7_1202</name>
</gene>
<dbReference type="EMBL" id="CP000744">
    <property type="protein sequence ID" value="ABR84364.1"/>
    <property type="molecule type" value="Genomic_DNA"/>
</dbReference>
<dbReference type="RefSeq" id="WP_012074489.1">
    <property type="nucleotide sequence ID" value="NC_009656.1"/>
</dbReference>
<dbReference type="SMR" id="A6V0K2"/>
<dbReference type="KEGG" id="pap:PSPA7_1202"/>
<dbReference type="HOGENOM" id="CLU_002794_2_1_6"/>
<dbReference type="Proteomes" id="UP000001582">
    <property type="component" value="Chromosome"/>
</dbReference>
<dbReference type="GO" id="GO:0005829">
    <property type="term" value="C:cytosol"/>
    <property type="evidence" value="ECO:0007669"/>
    <property type="project" value="TreeGrafter"/>
</dbReference>
<dbReference type="GO" id="GO:0005525">
    <property type="term" value="F:GTP binding"/>
    <property type="evidence" value="ECO:0007669"/>
    <property type="project" value="UniProtKB-UniRule"/>
</dbReference>
<dbReference type="GO" id="GO:0003924">
    <property type="term" value="F:GTPase activity"/>
    <property type="evidence" value="ECO:0007669"/>
    <property type="project" value="InterPro"/>
</dbReference>
<dbReference type="GO" id="GO:0097216">
    <property type="term" value="F:guanosine tetraphosphate binding"/>
    <property type="evidence" value="ECO:0007669"/>
    <property type="project" value="UniProtKB-ARBA"/>
</dbReference>
<dbReference type="GO" id="GO:0016150">
    <property type="term" value="F:translation release factor activity, codon nonspecific"/>
    <property type="evidence" value="ECO:0007669"/>
    <property type="project" value="TreeGrafter"/>
</dbReference>
<dbReference type="GO" id="GO:0016149">
    <property type="term" value="F:translation release factor activity, codon specific"/>
    <property type="evidence" value="ECO:0007669"/>
    <property type="project" value="UniProtKB-UniRule"/>
</dbReference>
<dbReference type="GO" id="GO:0006449">
    <property type="term" value="P:regulation of translational termination"/>
    <property type="evidence" value="ECO:0007669"/>
    <property type="project" value="UniProtKB-UniRule"/>
</dbReference>
<dbReference type="CDD" id="cd04169">
    <property type="entry name" value="RF3"/>
    <property type="match status" value="1"/>
</dbReference>
<dbReference type="CDD" id="cd03689">
    <property type="entry name" value="RF3_II"/>
    <property type="match status" value="1"/>
</dbReference>
<dbReference type="CDD" id="cd16259">
    <property type="entry name" value="RF3_III"/>
    <property type="match status" value="1"/>
</dbReference>
<dbReference type="FunFam" id="2.40.30.10:FF:000040">
    <property type="entry name" value="Peptide chain release factor 3"/>
    <property type="match status" value="1"/>
</dbReference>
<dbReference type="FunFam" id="3.30.70.3280:FF:000001">
    <property type="entry name" value="Peptide chain release factor 3"/>
    <property type="match status" value="1"/>
</dbReference>
<dbReference type="FunFam" id="3.40.50.300:FF:000542">
    <property type="entry name" value="Peptide chain release factor 3"/>
    <property type="match status" value="1"/>
</dbReference>
<dbReference type="Gene3D" id="3.40.50.300">
    <property type="entry name" value="P-loop containing nucleotide triphosphate hydrolases"/>
    <property type="match status" value="2"/>
</dbReference>
<dbReference type="Gene3D" id="3.30.70.3280">
    <property type="entry name" value="Peptide chain release factor 3, domain III"/>
    <property type="match status" value="1"/>
</dbReference>
<dbReference type="HAMAP" id="MF_00072">
    <property type="entry name" value="Rel_fac_3"/>
    <property type="match status" value="1"/>
</dbReference>
<dbReference type="InterPro" id="IPR053905">
    <property type="entry name" value="EF-G-like_DII"/>
</dbReference>
<dbReference type="InterPro" id="IPR035647">
    <property type="entry name" value="EFG_III/V"/>
</dbReference>
<dbReference type="InterPro" id="IPR031157">
    <property type="entry name" value="G_TR_CS"/>
</dbReference>
<dbReference type="InterPro" id="IPR027417">
    <property type="entry name" value="P-loop_NTPase"/>
</dbReference>
<dbReference type="InterPro" id="IPR004548">
    <property type="entry name" value="PrfC"/>
</dbReference>
<dbReference type="InterPro" id="IPR032090">
    <property type="entry name" value="RF3_C"/>
</dbReference>
<dbReference type="InterPro" id="IPR038467">
    <property type="entry name" value="RF3_dom_3_sf"/>
</dbReference>
<dbReference type="InterPro" id="IPR041732">
    <property type="entry name" value="RF3_GTP-bd"/>
</dbReference>
<dbReference type="InterPro" id="IPR005225">
    <property type="entry name" value="Small_GTP-bd"/>
</dbReference>
<dbReference type="InterPro" id="IPR000795">
    <property type="entry name" value="T_Tr_GTP-bd_dom"/>
</dbReference>
<dbReference type="InterPro" id="IPR009000">
    <property type="entry name" value="Transl_B-barrel_sf"/>
</dbReference>
<dbReference type="NCBIfam" id="TIGR00503">
    <property type="entry name" value="prfC"/>
    <property type="match status" value="1"/>
</dbReference>
<dbReference type="NCBIfam" id="NF001964">
    <property type="entry name" value="PRK00741.1"/>
    <property type="match status" value="1"/>
</dbReference>
<dbReference type="NCBIfam" id="TIGR00231">
    <property type="entry name" value="small_GTP"/>
    <property type="match status" value="1"/>
</dbReference>
<dbReference type="PANTHER" id="PTHR43556">
    <property type="entry name" value="PEPTIDE CHAIN RELEASE FACTOR RF3"/>
    <property type="match status" value="1"/>
</dbReference>
<dbReference type="PANTHER" id="PTHR43556:SF2">
    <property type="entry name" value="PEPTIDE CHAIN RELEASE FACTOR RF3"/>
    <property type="match status" value="1"/>
</dbReference>
<dbReference type="Pfam" id="PF22042">
    <property type="entry name" value="EF-G_D2"/>
    <property type="match status" value="1"/>
</dbReference>
<dbReference type="Pfam" id="PF00009">
    <property type="entry name" value="GTP_EFTU"/>
    <property type="match status" value="1"/>
</dbReference>
<dbReference type="Pfam" id="PF16658">
    <property type="entry name" value="RF3_C"/>
    <property type="match status" value="1"/>
</dbReference>
<dbReference type="PRINTS" id="PR00315">
    <property type="entry name" value="ELONGATNFCT"/>
</dbReference>
<dbReference type="SUPFAM" id="SSF54980">
    <property type="entry name" value="EF-G C-terminal domain-like"/>
    <property type="match status" value="1"/>
</dbReference>
<dbReference type="SUPFAM" id="SSF52540">
    <property type="entry name" value="P-loop containing nucleoside triphosphate hydrolases"/>
    <property type="match status" value="1"/>
</dbReference>
<dbReference type="SUPFAM" id="SSF50447">
    <property type="entry name" value="Translation proteins"/>
    <property type="match status" value="1"/>
</dbReference>
<dbReference type="PROSITE" id="PS00301">
    <property type="entry name" value="G_TR_1"/>
    <property type="match status" value="1"/>
</dbReference>
<dbReference type="PROSITE" id="PS51722">
    <property type="entry name" value="G_TR_2"/>
    <property type="match status" value="1"/>
</dbReference>
<sequence>MTTQAAEVAKRRTFAIISHPDAGKTTITEKLLLMGKAIAVAGTVKSRKSDRHATSDWMEMEKQRGISITTSVMQFPYREHMINLLDTPGHEDFSEDTYRTLTAVDSALMVLDGGKGVEPRTIALMEVCRLRDTPIVSFINKLDRDIRDPIELLDEIEAVLKIKAAPITWPIGCYKDFKGVYHLADDKIIVYVPGHGHERIETKIIDKLDSDEARAHLGDLYDNFVEQLELVQGACHTFDKDAFLKGEMTPVFFGTALGNFGVDQVLDCIVDWAPQPLSRATHERNVEPTEEKFSGFVFKIQANMDPKHRDRIAFMRICSGKYEKGMKMRHVRLGKDVKIADALTFFSSEREQLEEAYAGDIIGLHNHGTIQIGDTFSEGENFGFTGIPHFAPELFRRVRLKDPLKSKQLRQGLQELAEEGATQVFFPERNNDIILGAVGVLQFDVVASRLKEEYKVECAYEAINVWSARWIECDDEKKLKEFQDKAFENLSVDGGGHLTYLAPTRVNLSLMEERWPDIRFRATREHH</sequence>
<feature type="chain" id="PRO_1000023667" description="Peptide chain release factor 3">
    <location>
        <begin position="1"/>
        <end position="527"/>
    </location>
</feature>
<feature type="domain" description="tr-type G">
    <location>
        <begin position="9"/>
        <end position="277"/>
    </location>
</feature>
<feature type="binding site" evidence="1">
    <location>
        <begin position="18"/>
        <end position="25"/>
    </location>
    <ligand>
        <name>GTP</name>
        <dbReference type="ChEBI" id="CHEBI:37565"/>
    </ligand>
</feature>
<feature type="binding site" evidence="1">
    <location>
        <begin position="86"/>
        <end position="90"/>
    </location>
    <ligand>
        <name>GTP</name>
        <dbReference type="ChEBI" id="CHEBI:37565"/>
    </ligand>
</feature>
<feature type="binding site" evidence="1">
    <location>
        <begin position="140"/>
        <end position="143"/>
    </location>
    <ligand>
        <name>GTP</name>
        <dbReference type="ChEBI" id="CHEBI:37565"/>
    </ligand>
</feature>
<proteinExistence type="inferred from homology"/>
<comment type="function">
    <text evidence="1">Increases the formation of ribosomal termination complexes and stimulates activities of RF-1 and RF-2. It binds guanine nucleotides and has strong preference for UGA stop codons. It may interact directly with the ribosome. The stimulation of RF-1 and RF-2 is significantly reduced by GTP and GDP, but not by GMP.</text>
</comment>
<comment type="subcellular location">
    <subcellularLocation>
        <location evidence="1">Cytoplasm</location>
    </subcellularLocation>
</comment>
<comment type="similarity">
    <text evidence="1">Belongs to the TRAFAC class translation factor GTPase superfamily. Classic translation factor GTPase family. PrfC subfamily.</text>
</comment>
<evidence type="ECO:0000255" key="1">
    <source>
        <dbReference type="HAMAP-Rule" id="MF_00072"/>
    </source>
</evidence>
<keyword id="KW-0963">Cytoplasm</keyword>
<keyword id="KW-0342">GTP-binding</keyword>
<keyword id="KW-0547">Nucleotide-binding</keyword>
<keyword id="KW-0648">Protein biosynthesis</keyword>
<protein>
    <recommendedName>
        <fullName evidence="1">Peptide chain release factor 3</fullName>
        <shortName evidence="1">RF-3</shortName>
    </recommendedName>
</protein>
<name>RF3_PSEP7</name>